<accession>D4GZN2</accession>
<sequence length="358" mass="39907">MELGSADAFDRMGTLGVEEEFYIVDADGRPTSGIDDLVYGPEPPEPLAGRLDHELFQFTIETQTPLIEDPDEAGAAVSTVREALVDHAAAHGYRIAAAGLHPAAKWRELDHATKPRYQAQLDRIQYPQHRNTTAGLHVHVGVDDADKAVWVANELRWYLAPLLALSANSPFWNGFDTGLASARAKVFENLPNTGMPTAFDDFEEFQRFERRMVEYGSIDDRGELWYDVRPHTGHGTVEIRTPDAQTDPERVTDFVEYVHALVLDLADRYEAGESGTSVRRELLDENKWRATRYGRDTDFIAPDSEGVVSLVSFVETESDRLGVDGLRSLLDAESGTAVQRRIHEESGLDGLCEHLTLD</sequence>
<feature type="chain" id="PRO_0000428862" description="Glutamate--cysteine ligase">
    <location>
        <begin position="1"/>
        <end position="358"/>
    </location>
</feature>
<keyword id="KW-0067">ATP-binding</keyword>
<keyword id="KW-0436">Ligase</keyword>
<keyword id="KW-0547">Nucleotide-binding</keyword>
<keyword id="KW-1185">Reference proteome</keyword>
<reference key="1">
    <citation type="journal article" date="2010" name="PLoS ONE">
        <title>The complete genome sequence of Haloferax volcanii DS2, a model archaeon.</title>
        <authorList>
            <person name="Hartman A.L."/>
            <person name="Norais C."/>
            <person name="Badger J.H."/>
            <person name="Delmas S."/>
            <person name="Haldenby S."/>
            <person name="Madupu R."/>
            <person name="Robinson J."/>
            <person name="Khouri H."/>
            <person name="Ren Q."/>
            <person name="Lowe T.M."/>
            <person name="Maupin-Furlow J."/>
            <person name="Pohlschroder M."/>
            <person name="Daniels C."/>
            <person name="Pfeiffer F."/>
            <person name="Allers T."/>
            <person name="Eisen J.A."/>
        </authorList>
    </citation>
    <scope>NUCLEOTIDE SEQUENCE [LARGE SCALE GENOMIC DNA]</scope>
    <source>
        <strain>ATCC 29605 / DSM 3757 / JCM 8879 / NBRC 14742 / NCIMB 2012 / VKM B-1768 / DS2</strain>
    </source>
</reference>
<reference key="2">
    <citation type="journal article" date="2009" name="J. Bacteriol.">
        <title>Identification and characterization of gshA, a gene encoding the glutamate-cysteine ligase in the halophilic archaeon Haloferax volcanii.</title>
        <authorList>
            <person name="Malki L."/>
            <person name="Yanku M."/>
            <person name="Borovok I."/>
            <person name="Cohen G."/>
            <person name="Mevarech M."/>
            <person name="Aharonowitz Y."/>
        </authorList>
    </citation>
    <scope>FUNCTION</scope>
    <source>
        <strain>ATCC 29605 / DSM 3757 / JCM 8879 / NBRC 14742 / NCIMB 2012 / VKM B-1768 / DS2</strain>
    </source>
</reference>
<reference key="3">
    <citation type="journal article" date="2020" name="Nat. Commun.">
        <title>The Archaeal Proteome Project advances knowledge about archaeal cell biology through comprehensive proteomics.</title>
        <authorList>
            <person name="Schulze S."/>
            <person name="Adams Z."/>
            <person name="Cerletti M."/>
            <person name="De Castro R."/>
            <person name="Ferreira-Cerca S."/>
            <person name="Fufezan C."/>
            <person name="Gimenez M.I."/>
            <person name="Hippler M."/>
            <person name="Jevtic Z."/>
            <person name="Knueppel R."/>
            <person name="Legerme G."/>
            <person name="Lenz C."/>
            <person name="Marchfelder A."/>
            <person name="Maupin-Furlow J."/>
            <person name="Paggi R.A."/>
            <person name="Pfeiffer F."/>
            <person name="Poetsch A."/>
            <person name="Urlaub H."/>
            <person name="Pohlschroder M."/>
        </authorList>
    </citation>
    <scope>SEQUENCE REVISION TO N-TERMINUS</scope>
    <scope>IDENTIFICATION BY MASS SPECTROMETRY</scope>
    <source>
        <strain>ATCC 29605 / DSM 3757 / JCM 8879 / NBRC 14742 / NCIMB 2012 / VKM B-1768 / DS2</strain>
    </source>
</reference>
<protein>
    <recommendedName>
        <fullName evidence="1">Glutamate--cysteine ligase</fullName>
        <ecNumber evidence="1">6.3.2.2</ecNumber>
    </recommendedName>
    <alternativeName>
        <fullName evidence="1">Gamma-glutamylcysteine synthetase</fullName>
        <shortName evidence="1">GCS</shortName>
        <shortName evidence="1">Gamma-GCS</shortName>
    </alternativeName>
</protein>
<organism>
    <name type="scientific">Haloferax volcanii (strain ATCC 29605 / DSM 3757 / JCM 8879 / NBRC 14742 / NCIMB 2012 / VKM B-1768 / DS2)</name>
    <name type="common">Halobacterium volcanii</name>
    <dbReference type="NCBI Taxonomy" id="309800"/>
    <lineage>
        <taxon>Archaea</taxon>
        <taxon>Methanobacteriati</taxon>
        <taxon>Methanobacteriota</taxon>
        <taxon>Stenosarchaea group</taxon>
        <taxon>Halobacteria</taxon>
        <taxon>Halobacteriales</taxon>
        <taxon>Haloferacaceae</taxon>
        <taxon>Haloferax</taxon>
    </lineage>
</organism>
<name>GCS2_HALVD</name>
<comment type="function">
    <text evidence="1 2">Catalyzes the synthesis of gamma-glutamylcysteine (gamma-GC), the main low-molecular-weight thiol compound instead of glutathione in halophilic archaea.</text>
</comment>
<comment type="catalytic activity">
    <reaction evidence="1">
        <text>L-cysteine + L-glutamate + ATP = gamma-L-glutamyl-L-cysteine + ADP + phosphate + H(+)</text>
        <dbReference type="Rhea" id="RHEA:13285"/>
        <dbReference type="ChEBI" id="CHEBI:15378"/>
        <dbReference type="ChEBI" id="CHEBI:29985"/>
        <dbReference type="ChEBI" id="CHEBI:30616"/>
        <dbReference type="ChEBI" id="CHEBI:35235"/>
        <dbReference type="ChEBI" id="CHEBI:43474"/>
        <dbReference type="ChEBI" id="CHEBI:58173"/>
        <dbReference type="ChEBI" id="CHEBI:456216"/>
        <dbReference type="EC" id="6.3.2.2"/>
    </reaction>
</comment>
<comment type="similarity">
    <text evidence="1">Belongs to the glutamate--cysteine ligase type 2 family. YbdK subfamily.</text>
</comment>
<proteinExistence type="evidence at protein level"/>
<gene>
    <name evidence="1 3" type="primary">gshA</name>
    <name type="ordered locus">HVO_1668</name>
</gene>
<evidence type="ECO:0000255" key="1">
    <source>
        <dbReference type="HAMAP-Rule" id="MF_01609"/>
    </source>
</evidence>
<evidence type="ECO:0000269" key="2">
    <source>
    </source>
</evidence>
<evidence type="ECO:0000303" key="3">
    <source>
    </source>
</evidence>
<dbReference type="EC" id="6.3.2.2" evidence="1"/>
<dbReference type="EMBL" id="CP001956">
    <property type="protein sequence ID" value="ADE04411.2"/>
    <property type="molecule type" value="Genomic_DNA"/>
</dbReference>
<dbReference type="RefSeq" id="WP_004041558.1">
    <property type="nucleotide sequence ID" value="NC_013967.1"/>
</dbReference>
<dbReference type="SMR" id="D4GZN2"/>
<dbReference type="STRING" id="309800.HVO_1668"/>
<dbReference type="PaxDb" id="309800-C498_03695"/>
<dbReference type="EnsemblBacteria" id="ADE04411">
    <property type="protein sequence ID" value="ADE04411"/>
    <property type="gene ID" value="HVO_1668"/>
</dbReference>
<dbReference type="GeneID" id="8926549"/>
<dbReference type="KEGG" id="hvo:HVO_1668"/>
<dbReference type="eggNOG" id="arCOG02722">
    <property type="taxonomic scope" value="Archaea"/>
</dbReference>
<dbReference type="HOGENOM" id="CLU_044848_1_0_2"/>
<dbReference type="OrthoDB" id="287652at2157"/>
<dbReference type="BRENDA" id="6.3.2.2">
    <property type="organism ID" value="2561"/>
</dbReference>
<dbReference type="Proteomes" id="UP000008243">
    <property type="component" value="Chromosome"/>
</dbReference>
<dbReference type="GO" id="GO:0005524">
    <property type="term" value="F:ATP binding"/>
    <property type="evidence" value="ECO:0007669"/>
    <property type="project" value="UniProtKB-KW"/>
</dbReference>
<dbReference type="GO" id="GO:0004357">
    <property type="term" value="F:glutamate-cysteine ligase activity"/>
    <property type="evidence" value="ECO:0007669"/>
    <property type="project" value="UniProtKB-UniRule"/>
</dbReference>
<dbReference type="GO" id="GO:0042398">
    <property type="term" value="P:modified amino acid biosynthetic process"/>
    <property type="evidence" value="ECO:0007669"/>
    <property type="project" value="InterPro"/>
</dbReference>
<dbReference type="Gene3D" id="3.30.590.20">
    <property type="match status" value="1"/>
</dbReference>
<dbReference type="HAMAP" id="MF_01609">
    <property type="entry name" value="Glu_cys_ligase_2"/>
    <property type="match status" value="1"/>
</dbReference>
<dbReference type="InterPro" id="IPR050141">
    <property type="entry name" value="GCL_type2/YbdK_subfam"/>
</dbReference>
<dbReference type="InterPro" id="IPR006336">
    <property type="entry name" value="GCS2"/>
</dbReference>
<dbReference type="InterPro" id="IPR014746">
    <property type="entry name" value="Gln_synth/guanido_kin_cat_dom"/>
</dbReference>
<dbReference type="InterPro" id="IPR011793">
    <property type="entry name" value="YbdK"/>
</dbReference>
<dbReference type="NCBIfam" id="TIGR02050">
    <property type="entry name" value="gshA_cyan_rel"/>
    <property type="match status" value="1"/>
</dbReference>
<dbReference type="NCBIfam" id="NF010045">
    <property type="entry name" value="PRK13518.1"/>
    <property type="match status" value="1"/>
</dbReference>
<dbReference type="PANTHER" id="PTHR36510">
    <property type="entry name" value="GLUTAMATE--CYSTEINE LIGASE 2-RELATED"/>
    <property type="match status" value="1"/>
</dbReference>
<dbReference type="PANTHER" id="PTHR36510:SF1">
    <property type="entry name" value="GLUTAMATE--CYSTEINE LIGASE 2-RELATED"/>
    <property type="match status" value="1"/>
</dbReference>
<dbReference type="Pfam" id="PF04107">
    <property type="entry name" value="GCS2"/>
    <property type="match status" value="1"/>
</dbReference>
<dbReference type="SUPFAM" id="SSF55931">
    <property type="entry name" value="Glutamine synthetase/guanido kinase"/>
    <property type="match status" value="1"/>
</dbReference>